<accession>A5W7B0</accession>
<keyword id="KW-0210">Decarboxylase</keyword>
<keyword id="KW-0456">Lyase</keyword>
<keyword id="KW-0665">Pyrimidine biosynthesis</keyword>
<name>PYRF_PSEP1</name>
<sequence>MSACQTPLIVALDFPTREAALKLADQLDPALCRVKVGKELFTSSASGIVETLCDKGFEVFLDLKFHDIPNTTAMAVKAAAEMGVWMVNVHCSGGLRMMVACREELAKRSGPQPLLIGVTVLTSMEREDLAGIGLDVDPQEQVLRLAALAEKAGMDGLVCSALEAPALKAAHPSLQLVTPGIRPAGSAQDDQRRILTPRQALDAGSDYLVIGRPISQAADPAQALAAVVAEIRG</sequence>
<proteinExistence type="inferred from homology"/>
<evidence type="ECO:0000255" key="1">
    <source>
        <dbReference type="HAMAP-Rule" id="MF_01200"/>
    </source>
</evidence>
<comment type="function">
    <text evidence="1">Catalyzes the decarboxylation of orotidine 5'-monophosphate (OMP) to uridine 5'-monophosphate (UMP).</text>
</comment>
<comment type="catalytic activity">
    <reaction evidence="1">
        <text>orotidine 5'-phosphate + H(+) = UMP + CO2</text>
        <dbReference type="Rhea" id="RHEA:11596"/>
        <dbReference type="ChEBI" id="CHEBI:15378"/>
        <dbReference type="ChEBI" id="CHEBI:16526"/>
        <dbReference type="ChEBI" id="CHEBI:57538"/>
        <dbReference type="ChEBI" id="CHEBI:57865"/>
        <dbReference type="EC" id="4.1.1.23"/>
    </reaction>
</comment>
<comment type="pathway">
    <text evidence="1">Pyrimidine metabolism; UMP biosynthesis via de novo pathway; UMP from orotate: step 2/2.</text>
</comment>
<comment type="subunit">
    <text evidence="1">Homodimer.</text>
</comment>
<comment type="similarity">
    <text evidence="1">Belongs to the OMP decarboxylase family. Type 1 subfamily.</text>
</comment>
<feature type="chain" id="PRO_1000065935" description="Orotidine 5'-phosphate decarboxylase">
    <location>
        <begin position="1"/>
        <end position="233"/>
    </location>
</feature>
<feature type="active site" description="Proton donor" evidence="1">
    <location>
        <position position="64"/>
    </location>
</feature>
<feature type="binding site" evidence="1">
    <location>
        <position position="13"/>
    </location>
    <ligand>
        <name>substrate</name>
    </ligand>
</feature>
<feature type="binding site" evidence="1">
    <location>
        <position position="35"/>
    </location>
    <ligand>
        <name>substrate</name>
    </ligand>
</feature>
<feature type="binding site" evidence="1">
    <location>
        <begin position="62"/>
        <end position="71"/>
    </location>
    <ligand>
        <name>substrate</name>
    </ligand>
</feature>
<feature type="binding site" evidence="1">
    <location>
        <position position="122"/>
    </location>
    <ligand>
        <name>substrate</name>
    </ligand>
</feature>
<feature type="binding site" evidence="1">
    <location>
        <position position="182"/>
    </location>
    <ligand>
        <name>substrate</name>
    </ligand>
</feature>
<feature type="binding site" evidence="1">
    <location>
        <position position="191"/>
    </location>
    <ligand>
        <name>substrate</name>
    </ligand>
</feature>
<feature type="binding site" evidence="1">
    <location>
        <position position="211"/>
    </location>
    <ligand>
        <name>substrate</name>
    </ligand>
</feature>
<feature type="binding site" evidence="1">
    <location>
        <position position="212"/>
    </location>
    <ligand>
        <name>substrate</name>
    </ligand>
</feature>
<organism>
    <name type="scientific">Pseudomonas putida (strain ATCC 700007 / DSM 6899 / JCM 31910 / BCRC 17059 / LMG 24140 / F1)</name>
    <dbReference type="NCBI Taxonomy" id="351746"/>
    <lineage>
        <taxon>Bacteria</taxon>
        <taxon>Pseudomonadati</taxon>
        <taxon>Pseudomonadota</taxon>
        <taxon>Gammaproteobacteria</taxon>
        <taxon>Pseudomonadales</taxon>
        <taxon>Pseudomonadaceae</taxon>
        <taxon>Pseudomonas</taxon>
    </lineage>
</organism>
<reference key="1">
    <citation type="submission" date="2007-05" db="EMBL/GenBank/DDBJ databases">
        <title>Complete sequence of Pseudomonas putida F1.</title>
        <authorList>
            <consortium name="US DOE Joint Genome Institute"/>
            <person name="Copeland A."/>
            <person name="Lucas S."/>
            <person name="Lapidus A."/>
            <person name="Barry K."/>
            <person name="Detter J.C."/>
            <person name="Glavina del Rio T."/>
            <person name="Hammon N."/>
            <person name="Israni S."/>
            <person name="Dalin E."/>
            <person name="Tice H."/>
            <person name="Pitluck S."/>
            <person name="Chain P."/>
            <person name="Malfatti S."/>
            <person name="Shin M."/>
            <person name="Vergez L."/>
            <person name="Schmutz J."/>
            <person name="Larimer F."/>
            <person name="Land M."/>
            <person name="Hauser L."/>
            <person name="Kyrpides N."/>
            <person name="Lykidis A."/>
            <person name="Parales R."/>
            <person name="Richardson P."/>
        </authorList>
    </citation>
    <scope>NUCLEOTIDE SEQUENCE [LARGE SCALE GENOMIC DNA]</scope>
    <source>
        <strain>ATCC 700007 / DSM 6899 / JCM 31910 / BCRC 17059 / LMG 24140 / F1</strain>
    </source>
</reference>
<dbReference type="EC" id="4.1.1.23" evidence="1"/>
<dbReference type="EMBL" id="CP000712">
    <property type="protein sequence ID" value="ABQ80020.1"/>
    <property type="molecule type" value="Genomic_DNA"/>
</dbReference>
<dbReference type="SMR" id="A5W7B0"/>
<dbReference type="KEGG" id="ppf:Pput_3896"/>
<dbReference type="eggNOG" id="COG0284">
    <property type="taxonomic scope" value="Bacteria"/>
</dbReference>
<dbReference type="HOGENOM" id="CLU_067069_0_0_6"/>
<dbReference type="UniPathway" id="UPA00070">
    <property type="reaction ID" value="UER00120"/>
</dbReference>
<dbReference type="GO" id="GO:0005829">
    <property type="term" value="C:cytosol"/>
    <property type="evidence" value="ECO:0007669"/>
    <property type="project" value="TreeGrafter"/>
</dbReference>
<dbReference type="GO" id="GO:0004590">
    <property type="term" value="F:orotidine-5'-phosphate decarboxylase activity"/>
    <property type="evidence" value="ECO:0007669"/>
    <property type="project" value="UniProtKB-UniRule"/>
</dbReference>
<dbReference type="GO" id="GO:0006207">
    <property type="term" value="P:'de novo' pyrimidine nucleobase biosynthetic process"/>
    <property type="evidence" value="ECO:0007669"/>
    <property type="project" value="InterPro"/>
</dbReference>
<dbReference type="GO" id="GO:0044205">
    <property type="term" value="P:'de novo' UMP biosynthetic process"/>
    <property type="evidence" value="ECO:0007669"/>
    <property type="project" value="UniProtKB-UniRule"/>
</dbReference>
<dbReference type="CDD" id="cd04725">
    <property type="entry name" value="OMP_decarboxylase_like"/>
    <property type="match status" value="1"/>
</dbReference>
<dbReference type="FunFam" id="3.20.20.70:FF:000015">
    <property type="entry name" value="Orotidine 5'-phosphate decarboxylase"/>
    <property type="match status" value="1"/>
</dbReference>
<dbReference type="Gene3D" id="3.20.20.70">
    <property type="entry name" value="Aldolase class I"/>
    <property type="match status" value="1"/>
</dbReference>
<dbReference type="HAMAP" id="MF_01200_B">
    <property type="entry name" value="OMPdecase_type1_B"/>
    <property type="match status" value="1"/>
</dbReference>
<dbReference type="InterPro" id="IPR013785">
    <property type="entry name" value="Aldolase_TIM"/>
</dbReference>
<dbReference type="InterPro" id="IPR014732">
    <property type="entry name" value="OMPdecase"/>
</dbReference>
<dbReference type="InterPro" id="IPR018089">
    <property type="entry name" value="OMPdecase_AS"/>
</dbReference>
<dbReference type="InterPro" id="IPR047596">
    <property type="entry name" value="OMPdecase_bac"/>
</dbReference>
<dbReference type="InterPro" id="IPR001754">
    <property type="entry name" value="OMPdeCOase_dom"/>
</dbReference>
<dbReference type="InterPro" id="IPR011060">
    <property type="entry name" value="RibuloseP-bd_barrel"/>
</dbReference>
<dbReference type="NCBIfam" id="NF001273">
    <property type="entry name" value="PRK00230.1"/>
    <property type="match status" value="1"/>
</dbReference>
<dbReference type="NCBIfam" id="TIGR01740">
    <property type="entry name" value="pyrF"/>
    <property type="match status" value="1"/>
</dbReference>
<dbReference type="PANTHER" id="PTHR32119">
    <property type="entry name" value="OROTIDINE 5'-PHOSPHATE DECARBOXYLASE"/>
    <property type="match status" value="1"/>
</dbReference>
<dbReference type="PANTHER" id="PTHR32119:SF2">
    <property type="entry name" value="OROTIDINE 5'-PHOSPHATE DECARBOXYLASE"/>
    <property type="match status" value="1"/>
</dbReference>
<dbReference type="Pfam" id="PF00215">
    <property type="entry name" value="OMPdecase"/>
    <property type="match status" value="1"/>
</dbReference>
<dbReference type="SMART" id="SM00934">
    <property type="entry name" value="OMPdecase"/>
    <property type="match status" value="1"/>
</dbReference>
<dbReference type="SUPFAM" id="SSF51366">
    <property type="entry name" value="Ribulose-phoshate binding barrel"/>
    <property type="match status" value="1"/>
</dbReference>
<dbReference type="PROSITE" id="PS00156">
    <property type="entry name" value="OMPDECASE"/>
    <property type="match status" value="1"/>
</dbReference>
<protein>
    <recommendedName>
        <fullName evidence="1">Orotidine 5'-phosphate decarboxylase</fullName>
        <ecNumber evidence="1">4.1.1.23</ecNumber>
    </recommendedName>
    <alternativeName>
        <fullName evidence="1">OMP decarboxylase</fullName>
        <shortName evidence="1">OMPDCase</shortName>
        <shortName evidence="1">OMPdecase</shortName>
    </alternativeName>
</protein>
<gene>
    <name evidence="1" type="primary">pyrF</name>
    <name type="ordered locus">Pput_3896</name>
</gene>